<organism>
    <name type="scientific">Saccharomyces cerevisiae (strain ATCC 204508 / S288c)</name>
    <name type="common">Baker's yeast</name>
    <dbReference type="NCBI Taxonomy" id="559292"/>
    <lineage>
        <taxon>Eukaryota</taxon>
        <taxon>Fungi</taxon>
        <taxon>Dikarya</taxon>
        <taxon>Ascomycota</taxon>
        <taxon>Saccharomycotina</taxon>
        <taxon>Saccharomycetes</taxon>
        <taxon>Saccharomycetales</taxon>
        <taxon>Saccharomycetaceae</taxon>
        <taxon>Saccharomyces</taxon>
    </lineage>
</organism>
<dbReference type="EC" id="2.7.4.6" evidence="4 6 10"/>
<dbReference type="EMBL" id="D13562">
    <property type="protein sequence ID" value="BAA02758.1"/>
    <property type="molecule type" value="Genomic_DNA"/>
</dbReference>
<dbReference type="EMBL" id="X75780">
    <property type="protein sequence ID" value="CAA53407.1"/>
    <property type="molecule type" value="Genomic_DNA"/>
</dbReference>
<dbReference type="EMBL" id="Z28067">
    <property type="protein sequence ID" value="CAA81904.1"/>
    <property type="molecule type" value="Genomic_DNA"/>
</dbReference>
<dbReference type="EMBL" id="AY558263">
    <property type="protein sequence ID" value="AAS56589.1"/>
    <property type="molecule type" value="Genomic_DNA"/>
</dbReference>
<dbReference type="EMBL" id="BK006944">
    <property type="protein sequence ID" value="DAA09090.1"/>
    <property type="molecule type" value="Genomic_DNA"/>
</dbReference>
<dbReference type="PIR" id="S37889">
    <property type="entry name" value="S37889"/>
</dbReference>
<dbReference type="RefSeq" id="NP_012856.1">
    <property type="nucleotide sequence ID" value="NM_001179633.1"/>
</dbReference>
<dbReference type="PDB" id="3B54">
    <property type="method" value="X-ray"/>
    <property type="resolution" value="3.10 A"/>
    <property type="chains" value="A/B=1-153"/>
</dbReference>
<dbReference type="PDBsum" id="3B54"/>
<dbReference type="SMR" id="P36010"/>
<dbReference type="BioGRID" id="34067">
    <property type="interactions" value="145"/>
</dbReference>
<dbReference type="DIP" id="DIP-1969N"/>
<dbReference type="FunCoup" id="P36010">
    <property type="interactions" value="1129"/>
</dbReference>
<dbReference type="IntAct" id="P36010">
    <property type="interactions" value="47"/>
</dbReference>
<dbReference type="MINT" id="P36010"/>
<dbReference type="STRING" id="4932.YKL067W"/>
<dbReference type="iPTMnet" id="P36010"/>
<dbReference type="PaxDb" id="4932-YKL067W"/>
<dbReference type="PeptideAtlas" id="P36010"/>
<dbReference type="EnsemblFungi" id="YKL067W_mRNA">
    <property type="protein sequence ID" value="YKL067W"/>
    <property type="gene ID" value="YKL067W"/>
</dbReference>
<dbReference type="GeneID" id="853798"/>
<dbReference type="KEGG" id="sce:YKL067W"/>
<dbReference type="AGR" id="SGD:S000001550"/>
<dbReference type="SGD" id="S000001550">
    <property type="gene designation" value="YNK1"/>
</dbReference>
<dbReference type="VEuPathDB" id="FungiDB:YKL067W"/>
<dbReference type="eggNOG" id="KOG0888">
    <property type="taxonomic scope" value="Eukaryota"/>
</dbReference>
<dbReference type="GeneTree" id="ENSGT00940000164818"/>
<dbReference type="HOGENOM" id="CLU_060216_6_3_1"/>
<dbReference type="InParanoid" id="P36010"/>
<dbReference type="OMA" id="QHYGEHK"/>
<dbReference type="OrthoDB" id="2162449at2759"/>
<dbReference type="BioCyc" id="MetaCyc:YKL067W-MONOMER"/>
<dbReference type="BioCyc" id="YEAST:YKL067W-MONOMER"/>
<dbReference type="Reactome" id="R-SCE-499943">
    <property type="pathway name" value="Interconversion of nucleotide di- and triphosphates"/>
</dbReference>
<dbReference type="Reactome" id="R-SCE-6798695">
    <property type="pathway name" value="Neutrophil degranulation"/>
</dbReference>
<dbReference type="Reactome" id="R-SCE-9748787">
    <property type="pathway name" value="Azathioprine ADME"/>
</dbReference>
<dbReference type="Reactome" id="R-SCE-9755088">
    <property type="pathway name" value="Ribavirin ADME"/>
</dbReference>
<dbReference type="SABIO-RK" id="P36010"/>
<dbReference type="BioGRID-ORCS" id="853798">
    <property type="hits" value="2 hits in 10 CRISPR screens"/>
</dbReference>
<dbReference type="CD-CODE" id="E03F929F">
    <property type="entry name" value="Stress granule"/>
</dbReference>
<dbReference type="ChiTaRS" id="YNK1">
    <property type="organism name" value="yeast"/>
</dbReference>
<dbReference type="EvolutionaryTrace" id="P36010"/>
<dbReference type="PRO" id="PR:P36010"/>
<dbReference type="Proteomes" id="UP000002311">
    <property type="component" value="Chromosome XI"/>
</dbReference>
<dbReference type="RNAct" id="P36010">
    <property type="molecule type" value="protein"/>
</dbReference>
<dbReference type="GO" id="GO:0005829">
    <property type="term" value="C:cytosol"/>
    <property type="evidence" value="ECO:0000314"/>
    <property type="project" value="SGD"/>
</dbReference>
<dbReference type="GO" id="GO:0005758">
    <property type="term" value="C:mitochondrial intermembrane space"/>
    <property type="evidence" value="ECO:0000314"/>
    <property type="project" value="SGD"/>
</dbReference>
<dbReference type="GO" id="GO:0005739">
    <property type="term" value="C:mitochondrion"/>
    <property type="evidence" value="ECO:0007005"/>
    <property type="project" value="SGD"/>
</dbReference>
<dbReference type="GO" id="GO:0005524">
    <property type="term" value="F:ATP binding"/>
    <property type="evidence" value="ECO:0007669"/>
    <property type="project" value="UniProtKB-KW"/>
</dbReference>
<dbReference type="GO" id="GO:0046872">
    <property type="term" value="F:metal ion binding"/>
    <property type="evidence" value="ECO:0007669"/>
    <property type="project" value="UniProtKB-KW"/>
</dbReference>
<dbReference type="GO" id="GO:0004550">
    <property type="term" value="F:nucleoside diphosphate kinase activity"/>
    <property type="evidence" value="ECO:0000314"/>
    <property type="project" value="UniProtKB"/>
</dbReference>
<dbReference type="GO" id="GO:0006241">
    <property type="term" value="P:CTP biosynthetic process"/>
    <property type="evidence" value="ECO:0007669"/>
    <property type="project" value="InterPro"/>
</dbReference>
<dbReference type="GO" id="GO:0006974">
    <property type="term" value="P:DNA damage response"/>
    <property type="evidence" value="ECO:0000315"/>
    <property type="project" value="SGD"/>
</dbReference>
<dbReference type="GO" id="GO:0006281">
    <property type="term" value="P:DNA repair"/>
    <property type="evidence" value="ECO:0007669"/>
    <property type="project" value="UniProtKB-KW"/>
</dbReference>
<dbReference type="GO" id="GO:0006183">
    <property type="term" value="P:GTP biosynthetic process"/>
    <property type="evidence" value="ECO:0007669"/>
    <property type="project" value="InterPro"/>
</dbReference>
<dbReference type="GO" id="GO:0009142">
    <property type="term" value="P:nucleoside triphosphate biosynthetic process"/>
    <property type="evidence" value="ECO:0000314"/>
    <property type="project" value="UniProtKB"/>
</dbReference>
<dbReference type="GO" id="GO:0006228">
    <property type="term" value="P:UTP biosynthetic process"/>
    <property type="evidence" value="ECO:0007669"/>
    <property type="project" value="InterPro"/>
</dbReference>
<dbReference type="CDD" id="cd04413">
    <property type="entry name" value="NDPk_I"/>
    <property type="match status" value="1"/>
</dbReference>
<dbReference type="FunFam" id="3.30.70.141:FF:000002">
    <property type="entry name" value="Nucleoside diphosphate kinase"/>
    <property type="match status" value="1"/>
</dbReference>
<dbReference type="Gene3D" id="3.30.70.141">
    <property type="entry name" value="Nucleoside diphosphate kinase-like domain"/>
    <property type="match status" value="1"/>
</dbReference>
<dbReference type="HAMAP" id="MF_00451">
    <property type="entry name" value="NDP_kinase"/>
    <property type="match status" value="1"/>
</dbReference>
<dbReference type="InterPro" id="IPR034907">
    <property type="entry name" value="NDK-like_dom"/>
</dbReference>
<dbReference type="InterPro" id="IPR036850">
    <property type="entry name" value="NDK-like_dom_sf"/>
</dbReference>
<dbReference type="InterPro" id="IPR001564">
    <property type="entry name" value="Nucleoside_diP_kinase"/>
</dbReference>
<dbReference type="InterPro" id="IPR023005">
    <property type="entry name" value="Nucleoside_diP_kinase_AS"/>
</dbReference>
<dbReference type="NCBIfam" id="NF001908">
    <property type="entry name" value="PRK00668.1"/>
    <property type="match status" value="1"/>
</dbReference>
<dbReference type="PANTHER" id="PTHR11349">
    <property type="entry name" value="NUCLEOSIDE DIPHOSPHATE KINASE"/>
    <property type="match status" value="1"/>
</dbReference>
<dbReference type="Pfam" id="PF00334">
    <property type="entry name" value="NDK"/>
    <property type="match status" value="1"/>
</dbReference>
<dbReference type="PRINTS" id="PR01243">
    <property type="entry name" value="NUCDPKINASE"/>
</dbReference>
<dbReference type="SMART" id="SM00562">
    <property type="entry name" value="NDK"/>
    <property type="match status" value="1"/>
</dbReference>
<dbReference type="SUPFAM" id="SSF54919">
    <property type="entry name" value="Nucleoside diphosphate kinase, NDK"/>
    <property type="match status" value="1"/>
</dbReference>
<dbReference type="PROSITE" id="PS00469">
    <property type="entry name" value="NDPK"/>
    <property type="match status" value="1"/>
</dbReference>
<dbReference type="PROSITE" id="PS51374">
    <property type="entry name" value="NDPK_LIKE"/>
    <property type="match status" value="1"/>
</dbReference>
<comment type="function">
    <text evidence="7 10">Major role in the synthesis of nucleoside triphosphates other than ATP. The ATP gamma phosphate is transferred to the NDP beta phosphate via a ping-pong mechanism, using a phosphorylated active-site intermediate (PubMed:5793714). Required for repair of UV radiation- and etoposide-induced DNA damage (PubMed:18983998).</text>
</comment>
<comment type="catalytic activity">
    <reaction evidence="4 6 10">
        <text>a 2'-deoxyribonucleoside 5'-diphosphate + ATP = a 2'-deoxyribonucleoside 5'-triphosphate + ADP</text>
        <dbReference type="Rhea" id="RHEA:44640"/>
        <dbReference type="ChEBI" id="CHEBI:30616"/>
        <dbReference type="ChEBI" id="CHEBI:61560"/>
        <dbReference type="ChEBI" id="CHEBI:73316"/>
        <dbReference type="ChEBI" id="CHEBI:456216"/>
        <dbReference type="EC" id="2.7.4.6"/>
    </reaction>
</comment>
<comment type="catalytic activity">
    <reaction evidence="4 6 10">
        <text>a ribonucleoside 5'-diphosphate + ATP = a ribonucleoside 5'-triphosphate + ADP</text>
        <dbReference type="Rhea" id="RHEA:18113"/>
        <dbReference type="ChEBI" id="CHEBI:30616"/>
        <dbReference type="ChEBI" id="CHEBI:57930"/>
        <dbReference type="ChEBI" id="CHEBI:61557"/>
        <dbReference type="ChEBI" id="CHEBI:456216"/>
        <dbReference type="EC" id="2.7.4.6"/>
    </reaction>
</comment>
<comment type="cofactor">
    <cofactor evidence="10">
        <name>Mg(2+)</name>
        <dbReference type="ChEBI" id="CHEBI:18420"/>
    </cofactor>
</comment>
<comment type="biophysicochemical properties">
    <kinetics>
        <KM evidence="4 6">25 uM for ADP</KM>
        <KM evidence="4 6">300 uM for CDP</KM>
        <KM evidence="4 6">690 uM for UDP</KM>
        <KM evidence="4 6">400 uM for dCDP</KM>
        <KM evidence="4 6">220 uM for dGDP</KM>
        <KM evidence="4 6">370 uM for dTDP</KM>
        <KM evidence="4 6">530 uM for dUDP</KM>
        <KM evidence="4 6">220 uM for ATP</KM>
        <KM evidence="4 6">100 uM for CTP</KM>
        <KM evidence="4 6">150 uM for GTP</KM>
        <KM evidence="4 6">140 uM for UTP</KM>
        <KM evidence="4 6">170 uM for dCTP</KM>
        <KM evidence="4 6">22 uM for dGTP</KM>
        <KM evidence="4 6">110 uM for dTTP</KM>
        <KM evidence="4 6">130 uM for dUTP</KM>
        <KM>310 uM for ATP (in the presence of 1mM free Mg(2+) at 30 degrees Celsius and pH 8.0)</KM>
        <KM>43 uM for UDP (in the presence of 1mM free Mg(2+) at 30 degrees Celsius and pH 8.0)</KM>
        <KM>50 uM for ADP (in the presence of 1mM free Mg(2+) at 30 degrees Celsius and pH 8.0)</KM>
        <KM>250 uM for UTP (in the presence of 1mM free Mg(2+) at 30 degrees Celsius and pH 8.0)</KM>
        <Vmax evidence="4 6">130.0 umol/min/mg enzyme toward ADP</Vmax>
        <Vmax evidence="4 6">220.0 umol/min/mg enzyme toward CDP</Vmax>
        <Vmax evidence="4 6">400.0 umol/min/mg enzyme toward UDP</Vmax>
        <Vmax evidence="4 6">380.0 umol/min/mg enzyme toward dCDP</Vmax>
        <Vmax evidence="4 6">132.0 umol/min/mg enzyme toward dGDP</Vmax>
        <Vmax evidence="4 6">330.0 umol/min/mg enzyme toward dTDP</Vmax>
        <Vmax evidence="4 6">8.6 nmol/min/mg enzyme toward dUDP</Vmax>
        <Vmax evidence="4 6">170.0 umol/min/mg enzyme toward ATP</Vmax>
        <Vmax evidence="4 6">83.0 umol/min/mg enzyme toward CTP</Vmax>
        <Vmax evidence="4 6">350.0 umol/min/mg enzyme toward GTP</Vmax>
        <Vmax evidence="4 6">75.0 umol/min/mg enzyme toward UTP</Vmax>
        <Vmax evidence="4 6">110.0 umol/min/mg enzyme toward dCTP</Vmax>
        <Vmax evidence="4 6">38.0 umol/min/mg enzyme toward dGTP</Vmax>
        <Vmax evidence="4 6">105.0 umol/min/mg enzyme toward dTTP</Vmax>
        <Vmax evidence="4 6">90.0 umol/min/mg enzyme toward dUTP</Vmax>
        <Vmax>5.9 umol/min/ug enzyme with UDP as substrate for the forward reaction (in the presence of 1mM free Mg(2+) at 30 degrees Celsius and pH 8.0)</Vmax>
        <Vmax>5.1 umol/min/ug enzyme with UTP as substrate for the reverse reaction (in the presence of 1mM free Mg(2+) at 30 degrees Celsius and pH 8.0)</Vmax>
    </kinetics>
</comment>
<comment type="subunit">
    <text evidence="2 4 9">Homohexamer and homotetramer. Interacts with TOM40 preferentially in an unfolded, unphosphorylated form.</text>
</comment>
<comment type="subcellular location">
    <subcellularLocation>
        <location evidence="2">Cytoplasm</location>
    </subcellularLocation>
    <subcellularLocation>
        <location evidence="2 5 8">Mitochondrion intermembrane space</location>
    </subcellularLocation>
    <text>Localizes predominantly to the cytoplasm. A small fraction is present in the mitochondrial intermembrane space.</text>
</comment>
<comment type="PTM">
    <text>The N-terminus is blocked.</text>
</comment>
<comment type="miscellaneous">
    <text evidence="3">Present with 7130 molecules/cell in log phase SD medium.</text>
</comment>
<comment type="similarity">
    <text evidence="12">Belongs to the NDK family.</text>
</comment>
<keyword id="KW-0002">3D-structure</keyword>
<keyword id="KW-0067">ATP-binding</keyword>
<keyword id="KW-0963">Cytoplasm</keyword>
<keyword id="KW-0227">DNA damage</keyword>
<keyword id="KW-0234">DNA repair</keyword>
<keyword id="KW-0418">Kinase</keyword>
<keyword id="KW-0460">Magnesium</keyword>
<keyword id="KW-0479">Metal-binding</keyword>
<keyword id="KW-0496">Mitochondrion</keyword>
<keyword id="KW-0546">Nucleotide metabolism</keyword>
<keyword id="KW-0547">Nucleotide-binding</keyword>
<keyword id="KW-0597">Phosphoprotein</keyword>
<keyword id="KW-1185">Reference proteome</keyword>
<keyword id="KW-0808">Transferase</keyword>
<sequence length="153" mass="17167">MSSQTERTFIAVKPDGVQRGLVSQILSRFEKKGYKLVAIKLVKADDKLLEQHYAEHVGKPFFPKMVSFMKSGPILATVWEGKDVVRQGRTILGATNPLGSAPGTIRGDFGIDLGRNVCHGSDSVDSAEREINLWFKKEELVDWESNQAKWIYE</sequence>
<evidence type="ECO:0000250" key="1">
    <source>
        <dbReference type="UniProtKB" id="P22392"/>
    </source>
</evidence>
<evidence type="ECO:0000269" key="2">
    <source>
    </source>
</evidence>
<evidence type="ECO:0000269" key="3">
    <source>
    </source>
</evidence>
<evidence type="ECO:0000269" key="4">
    <source>
    </source>
</evidence>
<evidence type="ECO:0000269" key="5">
    <source>
    </source>
</evidence>
<evidence type="ECO:0000269" key="6">
    <source>
    </source>
</evidence>
<evidence type="ECO:0000269" key="7">
    <source>
    </source>
</evidence>
<evidence type="ECO:0000269" key="8">
    <source>
    </source>
</evidence>
<evidence type="ECO:0000269" key="9">
    <source>
    </source>
</evidence>
<evidence type="ECO:0000269" key="10">
    <source>
    </source>
</evidence>
<evidence type="ECO:0000303" key="11">
    <source>
    </source>
</evidence>
<evidence type="ECO:0000305" key="12"/>
<evidence type="ECO:0007744" key="13">
    <source>
    </source>
</evidence>
<evidence type="ECO:0007829" key="14">
    <source>
        <dbReference type="PDB" id="3B54"/>
    </source>
</evidence>
<gene>
    <name type="primary">YNK1</name>
    <name type="synonym">NDK1</name>
    <name type="synonym">YNK</name>
    <name type="ordered locus">YKL067W</name>
    <name type="ORF">YKL333</name>
</gene>
<reference key="1">
    <citation type="journal article" date="1993" name="Gene">
        <title>Isolation, overexpression and disruption of a Saccharomyces cerevisiae YNK gene encoding nucleoside diphosphate kinase.</title>
        <authorList>
            <person name="Fukuchi T."/>
            <person name="Nikawa J."/>
            <person name="Kimura N."/>
            <person name="Watanabe K."/>
        </authorList>
    </citation>
    <scope>NUCLEOTIDE SEQUENCE [GENOMIC DNA]</scope>
    <source>
        <strain>SP1</strain>
    </source>
</reference>
<reference key="2">
    <citation type="journal article" date="1994" name="Yeast">
        <title>Sequence of a 20.7 kb region of yeast chromosome XI includes the NUP100 gene, an open reading frame (ORF) possibly representing a nucleoside diphosphate kinase gene, tRNAs for His, Val and Trp in addition to seven ORFs with weak or no significant similarity to known proteins.</title>
        <authorList>
            <person name="Rasmussen S.W."/>
        </authorList>
    </citation>
    <scope>NUCLEOTIDE SEQUENCE [GENOMIC DNA]</scope>
    <source>
        <strain>ATCC 204508 / S288c</strain>
    </source>
</reference>
<reference key="3">
    <citation type="journal article" date="1994" name="Nature">
        <title>Complete DNA sequence of yeast chromosome XI.</title>
        <authorList>
            <person name="Dujon B."/>
            <person name="Alexandraki D."/>
            <person name="Andre B."/>
            <person name="Ansorge W."/>
            <person name="Baladron V."/>
            <person name="Ballesta J.P.G."/>
            <person name="Banrevi A."/>
            <person name="Bolle P.-A."/>
            <person name="Bolotin-Fukuhara M."/>
            <person name="Bossier P."/>
            <person name="Bou G."/>
            <person name="Boyer J."/>
            <person name="Buitrago M.J."/>
            <person name="Cheret G."/>
            <person name="Colleaux L."/>
            <person name="Daignan-Fornier B."/>
            <person name="del Rey F."/>
            <person name="Dion C."/>
            <person name="Domdey H."/>
            <person name="Duesterhoeft A."/>
            <person name="Duesterhus S."/>
            <person name="Entian K.-D."/>
            <person name="Erfle H."/>
            <person name="Esteban P.F."/>
            <person name="Feldmann H."/>
            <person name="Fernandes L."/>
            <person name="Fobo G.M."/>
            <person name="Fritz C."/>
            <person name="Fukuhara H."/>
            <person name="Gabel C."/>
            <person name="Gaillon L."/>
            <person name="Garcia-Cantalejo J.M."/>
            <person name="Garcia-Ramirez J.J."/>
            <person name="Gent M.E."/>
            <person name="Ghazvini M."/>
            <person name="Goffeau A."/>
            <person name="Gonzalez A."/>
            <person name="Grothues D."/>
            <person name="Guerreiro P."/>
            <person name="Hegemann J.H."/>
            <person name="Hewitt N."/>
            <person name="Hilger F."/>
            <person name="Hollenberg C.P."/>
            <person name="Horaitis O."/>
            <person name="Indge K.J."/>
            <person name="Jacquier A."/>
            <person name="James C.M."/>
            <person name="Jauniaux J.-C."/>
            <person name="Jimenez A."/>
            <person name="Keuchel H."/>
            <person name="Kirchrath L."/>
            <person name="Kleine K."/>
            <person name="Koetter P."/>
            <person name="Legrain P."/>
            <person name="Liebl S."/>
            <person name="Louis E.J."/>
            <person name="Maia e Silva A."/>
            <person name="Marck C."/>
            <person name="Monnier A.-L."/>
            <person name="Moestl D."/>
            <person name="Mueller S."/>
            <person name="Obermaier B."/>
            <person name="Oliver S.G."/>
            <person name="Pallier C."/>
            <person name="Pascolo S."/>
            <person name="Pfeiffer F."/>
            <person name="Philippsen P."/>
            <person name="Planta R.J."/>
            <person name="Pohl F.M."/>
            <person name="Pohl T.M."/>
            <person name="Poehlmann R."/>
            <person name="Portetelle D."/>
            <person name="Purnelle B."/>
            <person name="Puzos V."/>
            <person name="Ramezani Rad M."/>
            <person name="Rasmussen S.W."/>
            <person name="Remacha M.A."/>
            <person name="Revuelta J.L."/>
            <person name="Richard G.-F."/>
            <person name="Rieger M."/>
            <person name="Rodrigues-Pousada C."/>
            <person name="Rose M."/>
            <person name="Rupp T."/>
            <person name="Santos M.A."/>
            <person name="Schwager C."/>
            <person name="Sensen C."/>
            <person name="Skala J."/>
            <person name="Soares H."/>
            <person name="Sor F."/>
            <person name="Stegemann J."/>
            <person name="Tettelin H."/>
            <person name="Thierry A."/>
            <person name="Tzermia M."/>
            <person name="Urrestarazu L.A."/>
            <person name="van Dyck L."/>
            <person name="van Vliet-Reedijk J.C."/>
            <person name="Valens M."/>
            <person name="Vandenbol M."/>
            <person name="Vilela C."/>
            <person name="Vissers S."/>
            <person name="von Wettstein D."/>
            <person name="Voss H."/>
            <person name="Wiemann S."/>
            <person name="Xu G."/>
            <person name="Zimmermann J."/>
            <person name="Haasemann M."/>
            <person name="Becker I."/>
            <person name="Mewes H.-W."/>
        </authorList>
    </citation>
    <scope>NUCLEOTIDE SEQUENCE [LARGE SCALE GENOMIC DNA]</scope>
    <source>
        <strain>ATCC 204508 / S288c</strain>
    </source>
</reference>
<reference key="4">
    <citation type="journal article" date="2014" name="G3 (Bethesda)">
        <title>The reference genome sequence of Saccharomyces cerevisiae: Then and now.</title>
        <authorList>
            <person name="Engel S.R."/>
            <person name="Dietrich F.S."/>
            <person name="Fisk D.G."/>
            <person name="Binkley G."/>
            <person name="Balakrishnan R."/>
            <person name="Costanzo M.C."/>
            <person name="Dwight S.S."/>
            <person name="Hitz B.C."/>
            <person name="Karra K."/>
            <person name="Nash R.S."/>
            <person name="Weng S."/>
            <person name="Wong E.D."/>
            <person name="Lloyd P."/>
            <person name="Skrzypek M.S."/>
            <person name="Miyasato S.R."/>
            <person name="Simison M."/>
            <person name="Cherry J.M."/>
        </authorList>
    </citation>
    <scope>GENOME REANNOTATION</scope>
    <source>
        <strain>ATCC 204508 / S288c</strain>
    </source>
</reference>
<reference key="5">
    <citation type="journal article" date="2007" name="Genome Res.">
        <title>Approaching a complete repository of sequence-verified protein-encoding clones for Saccharomyces cerevisiae.</title>
        <authorList>
            <person name="Hu Y."/>
            <person name="Rolfs A."/>
            <person name="Bhullar B."/>
            <person name="Murthy T.V.S."/>
            <person name="Zhu C."/>
            <person name="Berger M.F."/>
            <person name="Camargo A.A."/>
            <person name="Kelley F."/>
            <person name="McCarron S."/>
            <person name="Jepson D."/>
            <person name="Richardson A."/>
            <person name="Raphael J."/>
            <person name="Moreira D."/>
            <person name="Taycher E."/>
            <person name="Zuo D."/>
            <person name="Mohr S."/>
            <person name="Kane M.F."/>
            <person name="Williamson J."/>
            <person name="Simpson A.J.G."/>
            <person name="Bulyk M.L."/>
            <person name="Harlow E."/>
            <person name="Marsischky G."/>
            <person name="Kolodner R.D."/>
            <person name="LaBaer J."/>
        </authorList>
    </citation>
    <scope>NUCLEOTIDE SEQUENCE [GENOMIC DNA]</scope>
    <source>
        <strain>ATCC 204508 / S288c</strain>
    </source>
</reference>
<reference key="6">
    <citation type="journal article" date="1969" name="Biochemistry">
        <title>Kinetic studies of yeast nucleoside diphosphate kinase.</title>
        <authorList>
            <person name="Garces E."/>
            <person name="Cleland W.W."/>
        </authorList>
    </citation>
    <scope>FUNCTION</scope>
    <scope>CATALYTIC ACTIVITY</scope>
    <scope>COFACTOR</scope>
    <scope>BIOPHYSICOCHEMICAL PROPERTIES</scope>
    <scope>REACTION MECHANISM</scope>
</reference>
<reference key="7">
    <citation type="journal article" date="1973" name="J. Biol. Chem.">
        <title>Nucleoside triphosphate-nucleoside diphosphate transphosphorylase (nucleoside diphosphokinase). 3. Subunit structure of the crystalline enzyme from brewers' yeast.</title>
        <authorList>
            <person name="Palmieri R."/>
            <person name="Yue R.H."/>
            <person name="Jacobs H.K."/>
            <person name="Maland L."/>
            <person name="Wu L."/>
            <person name="Kuby S.A."/>
        </authorList>
    </citation>
    <scope>SUBUNIT</scope>
</reference>
<reference key="8">
    <citation type="journal article" date="1991" name="Arch. Biochem. Biophys.">
        <title>Saccharomyces cerevisiae nucleoside-diphosphate kinase: purification, characterization, and substrate specificity.</title>
        <authorList>
            <person name="Jong A.Y."/>
            <person name="Ma J.J."/>
        </authorList>
    </citation>
    <scope>CATALYTIC ACTIVITY</scope>
    <scope>BIOPHYSICOCHEMICAL PROPERTIES</scope>
    <scope>SUBUNIT</scope>
</reference>
<reference key="9">
    <citation type="journal article" date="2003" name="Biochem. J.">
        <title>Nucleoside diphosphate kinase of Saccharomyces cerevisiae, Ynk1p: localization to the mitochondrial intermembrane space.</title>
        <authorList>
            <person name="Amutha B."/>
            <person name="Pain D."/>
        </authorList>
    </citation>
    <scope>SUBCELLULAR LOCATION</scope>
    <scope>INTERACTION WITH TOM40</scope>
</reference>
<reference key="10">
    <citation type="journal article" date="2003" name="Nature">
        <title>Global analysis of protein expression in yeast.</title>
        <authorList>
            <person name="Ghaemmaghami S."/>
            <person name="Huh W.-K."/>
            <person name="Bower K."/>
            <person name="Howson R.W."/>
            <person name="Belle A."/>
            <person name="Dephoure N."/>
            <person name="O'Shea E.K."/>
            <person name="Weissman J.S."/>
        </authorList>
    </citation>
    <scope>LEVEL OF PROTEIN EXPRESSION [LARGE SCALE ANALYSIS]</scope>
</reference>
<reference key="11">
    <citation type="journal article" date="2006" name="J. Bioenerg. Biomembr.">
        <title>The nucleoside diphosphate kinase from mimivirus: a peculiar affinity for deoxypyrimidine nucleotides.</title>
        <authorList>
            <person name="Jeudy S."/>
            <person name="Claverie J.-M."/>
            <person name="Abergel C."/>
        </authorList>
    </citation>
    <scope>CATALYTIC ACTIVITY</scope>
    <scope>BIOPHYSICOCHEMICAL PROPERTIES</scope>
</reference>
<reference key="12">
    <citation type="journal article" date="2006" name="J. Proteome Res.">
        <title>Toward the complete yeast mitochondrial proteome: multidimensional separation techniques for mitochondrial proteomics.</title>
        <authorList>
            <person name="Reinders J."/>
            <person name="Zahedi R.P."/>
            <person name="Pfanner N."/>
            <person name="Meisinger C."/>
            <person name="Sickmann A."/>
        </authorList>
    </citation>
    <scope>SUBCELLULAR LOCATION [LARGE SCALE ANALYSIS]</scope>
    <scope>IDENTIFICATION BY MASS SPECTROMETRY</scope>
</reference>
<reference key="13">
    <citation type="journal article" date="2008" name="Mol. Cell. Proteomics">
        <title>A multidimensional chromatography technology for in-depth phosphoproteome analysis.</title>
        <authorList>
            <person name="Albuquerque C.P."/>
            <person name="Smolka M.B."/>
            <person name="Payne S.H."/>
            <person name="Bafna V."/>
            <person name="Eng J."/>
            <person name="Zhou H."/>
        </authorList>
    </citation>
    <scope>PHOSPHORYLATION [LARGE SCALE ANALYSIS] AT THR-95</scope>
    <scope>IDENTIFICATION BY MASS SPECTROMETRY [LARGE SCALE ANALYSIS]</scope>
</reference>
<reference key="14">
    <citation type="journal article" date="2009" name="Mutat. Res.">
        <title>YNK1, the yeast homolog of human metastasis suppressor NM23, is required for repair of UV radiation- and etoposide-induced DNA damage.</title>
        <authorList>
            <person name="Yang M."/>
            <person name="Jarrett S.G."/>
            <person name="Craven R."/>
            <person name="Kaetzel D.M."/>
        </authorList>
    </citation>
    <scope>FUNCTION</scope>
</reference>
<reference key="15">
    <citation type="journal article" date="2012" name="Mol. Cell. Proteomics">
        <title>Intermembrane space proteome of yeast mitochondria.</title>
        <authorList>
            <person name="Voegtle F.N."/>
            <person name="Burkhart J.M."/>
            <person name="Rao S."/>
            <person name="Gerbeth C."/>
            <person name="Hinrichs J."/>
            <person name="Martinou J.C."/>
            <person name="Chacinska A."/>
            <person name="Sickmann A."/>
            <person name="Zahedi R.P."/>
            <person name="Meisinger C."/>
        </authorList>
    </citation>
    <scope>IDENTIFICATION BY MASS SPECTROMETRY</scope>
    <scope>SUBCELLULAR LOCATION [LARGE SCALE ANALYSIS]</scope>
</reference>
<reference key="16">
    <citation type="journal article" date="2008" name="Acta Crystallogr. F">
        <title>Structure of Ynk1 from the yeast Saccharomyces cerevisiae.</title>
        <authorList>
            <person name="Wang H."/>
            <person name="Bao R."/>
            <person name="Jiang C."/>
            <person name="Yang Z."/>
            <person name="Zhou C.Z."/>
            <person name="Chen Y."/>
        </authorList>
    </citation>
    <scope>X-RAY CRYSTALLOGRAPHY (3.1 ANGSTROMS)</scope>
</reference>
<feature type="chain" id="PRO_0000137153" description="Nucleoside diphosphate kinase">
    <location>
        <begin position="1"/>
        <end position="153"/>
    </location>
</feature>
<feature type="active site" description="Pros-phosphohistidine intermediate" evidence="1">
    <location>
        <position position="119"/>
    </location>
</feature>
<feature type="binding site" evidence="1">
    <location>
        <position position="13"/>
    </location>
    <ligand>
        <name>ATP</name>
        <dbReference type="ChEBI" id="CHEBI:30616"/>
    </ligand>
</feature>
<feature type="binding site" evidence="1">
    <location>
        <position position="61"/>
    </location>
    <ligand>
        <name>ATP</name>
        <dbReference type="ChEBI" id="CHEBI:30616"/>
    </ligand>
</feature>
<feature type="binding site" evidence="1">
    <location>
        <position position="89"/>
    </location>
    <ligand>
        <name>ATP</name>
        <dbReference type="ChEBI" id="CHEBI:30616"/>
    </ligand>
</feature>
<feature type="binding site" evidence="1">
    <location>
        <position position="95"/>
    </location>
    <ligand>
        <name>ATP</name>
        <dbReference type="ChEBI" id="CHEBI:30616"/>
    </ligand>
</feature>
<feature type="binding site" evidence="1">
    <location>
        <position position="106"/>
    </location>
    <ligand>
        <name>ATP</name>
        <dbReference type="ChEBI" id="CHEBI:30616"/>
    </ligand>
</feature>
<feature type="binding site" evidence="1">
    <location>
        <position position="116"/>
    </location>
    <ligand>
        <name>ATP</name>
        <dbReference type="ChEBI" id="CHEBI:30616"/>
    </ligand>
</feature>
<feature type="modified residue" description="Phosphothreonine" evidence="13">
    <location>
        <position position="95"/>
    </location>
</feature>
<feature type="strand" evidence="14">
    <location>
        <begin position="7"/>
        <end position="12"/>
    </location>
</feature>
<feature type="helix" evidence="14">
    <location>
        <begin position="14"/>
        <end position="19"/>
    </location>
</feature>
<feature type="helix" evidence="14">
    <location>
        <begin position="22"/>
        <end position="32"/>
    </location>
</feature>
<feature type="strand" evidence="14">
    <location>
        <begin position="35"/>
        <end position="42"/>
    </location>
</feature>
<feature type="helix" evidence="14">
    <location>
        <begin position="46"/>
        <end position="52"/>
    </location>
</feature>
<feature type="helix" evidence="14">
    <location>
        <begin position="63"/>
        <end position="70"/>
    </location>
</feature>
<feature type="strand" evidence="14">
    <location>
        <begin position="74"/>
        <end position="81"/>
    </location>
</feature>
<feature type="helix" evidence="14">
    <location>
        <begin position="84"/>
        <end position="92"/>
    </location>
</feature>
<feature type="helix" evidence="14">
    <location>
        <begin position="97"/>
        <end position="99"/>
    </location>
</feature>
<feature type="helix" evidence="14">
    <location>
        <begin position="105"/>
        <end position="109"/>
    </location>
</feature>
<feature type="strand" evidence="14">
    <location>
        <begin position="117"/>
        <end position="120"/>
    </location>
</feature>
<feature type="helix" evidence="14">
    <location>
        <begin position="124"/>
        <end position="134"/>
    </location>
</feature>
<feature type="helix" evidence="14">
    <location>
        <begin position="148"/>
        <end position="151"/>
    </location>
</feature>
<name>NDK_YEAST</name>
<protein>
    <recommendedName>
        <fullName evidence="11">Nucleoside diphosphate kinase</fullName>
        <shortName>NDK</shortName>
        <shortName>NDP kinase</shortName>
        <ecNumber evidence="4 6 10">2.7.4.6</ecNumber>
    </recommendedName>
</protein>
<proteinExistence type="evidence at protein level"/>
<accession>P36010</accession>
<accession>D6VXM0</accession>